<proteinExistence type="evidence at protein level"/>
<evidence type="ECO:0000250" key="1">
    <source>
        <dbReference type="UniProtKB" id="Q99PE8"/>
    </source>
</evidence>
<evidence type="ECO:0000250" key="2">
    <source>
        <dbReference type="UniProtKB" id="Q9H222"/>
    </source>
</evidence>
<evidence type="ECO:0000255" key="3"/>
<evidence type="ECO:0000255" key="4">
    <source>
        <dbReference type="PROSITE-ProRule" id="PRU00434"/>
    </source>
</evidence>
<evidence type="ECO:0000256" key="5">
    <source>
        <dbReference type="SAM" id="MobiDB-lite"/>
    </source>
</evidence>
<evidence type="ECO:0000269" key="6">
    <source>
    </source>
</evidence>
<evidence type="ECO:0000305" key="7"/>
<evidence type="ECO:0000312" key="8">
    <source>
        <dbReference type="RGD" id="620298"/>
    </source>
</evidence>
<dbReference type="EC" id="7.6.2.-" evidence="1"/>
<dbReference type="EMBL" id="AF312714">
    <property type="protein sequence ID" value="AAG53098.3"/>
    <property type="molecule type" value="mRNA"/>
</dbReference>
<dbReference type="EMBL" id="AY145899">
    <property type="protein sequence ID" value="AAN64275.1"/>
    <property type="molecule type" value="Genomic_DNA"/>
</dbReference>
<dbReference type="RefSeq" id="NP_446206.2">
    <property type="nucleotide sequence ID" value="NM_053754.2"/>
</dbReference>
<dbReference type="SMR" id="Q99PE7"/>
<dbReference type="FunCoup" id="Q99PE7">
    <property type="interactions" value="74"/>
</dbReference>
<dbReference type="STRING" id="10116.ENSRNOP00000007174"/>
<dbReference type="GlyCosmos" id="Q99PE7">
    <property type="glycosylation" value="2 sites, No reported glycans"/>
</dbReference>
<dbReference type="GlyGen" id="Q99PE7">
    <property type="glycosylation" value="2 sites"/>
</dbReference>
<dbReference type="PhosphoSitePlus" id="Q99PE7"/>
<dbReference type="PaxDb" id="10116-ENSRNOP00000007174"/>
<dbReference type="Ensembl" id="ENSRNOT00000007174.3">
    <property type="protein sequence ID" value="ENSRNOP00000007174.1"/>
    <property type="gene ID" value="ENSRNOG00000005250.3"/>
</dbReference>
<dbReference type="GeneID" id="114628"/>
<dbReference type="KEGG" id="rno:114628"/>
<dbReference type="UCSC" id="RGD:620298">
    <property type="organism name" value="rat"/>
</dbReference>
<dbReference type="AGR" id="RGD:620298"/>
<dbReference type="CTD" id="64240"/>
<dbReference type="RGD" id="620298">
    <property type="gene designation" value="Abcg5"/>
</dbReference>
<dbReference type="eggNOG" id="KOG0061">
    <property type="taxonomic scope" value="Eukaryota"/>
</dbReference>
<dbReference type="GeneTree" id="ENSGT00940000157985"/>
<dbReference type="HOGENOM" id="CLU_000604_57_9_1"/>
<dbReference type="InParanoid" id="Q99PE7"/>
<dbReference type="OMA" id="RVRPWWD"/>
<dbReference type="OrthoDB" id="41097at9989"/>
<dbReference type="PhylomeDB" id="Q99PE7"/>
<dbReference type="TreeFam" id="TF105212"/>
<dbReference type="Reactome" id="R-RNO-1369062">
    <property type="pathway name" value="ABC transporters in lipid homeostasis"/>
</dbReference>
<dbReference type="PRO" id="PR:Q99PE7"/>
<dbReference type="Proteomes" id="UP000002494">
    <property type="component" value="Chromosome 6"/>
</dbReference>
<dbReference type="Bgee" id="ENSRNOG00000005250">
    <property type="expression patterns" value="Expressed in jejunum and 7 other cell types or tissues"/>
</dbReference>
<dbReference type="GO" id="GO:0045177">
    <property type="term" value="C:apical part of cell"/>
    <property type="evidence" value="ECO:0000266"/>
    <property type="project" value="RGD"/>
</dbReference>
<dbReference type="GO" id="GO:0016324">
    <property type="term" value="C:apical plasma membrane"/>
    <property type="evidence" value="ECO:0000250"/>
    <property type="project" value="UniProtKB"/>
</dbReference>
<dbReference type="GO" id="GO:0043190">
    <property type="term" value="C:ATP-binding cassette (ABC) transporter complex"/>
    <property type="evidence" value="ECO:0000250"/>
    <property type="project" value="UniProtKB"/>
</dbReference>
<dbReference type="GO" id="GO:0016020">
    <property type="term" value="C:membrane"/>
    <property type="evidence" value="ECO:0000266"/>
    <property type="project" value="RGD"/>
</dbReference>
<dbReference type="GO" id="GO:0005886">
    <property type="term" value="C:plasma membrane"/>
    <property type="evidence" value="ECO:0000250"/>
    <property type="project" value="UniProtKB"/>
</dbReference>
<dbReference type="GO" id="GO:0043235">
    <property type="term" value="C:receptor complex"/>
    <property type="evidence" value="ECO:0000266"/>
    <property type="project" value="RGD"/>
</dbReference>
<dbReference type="GO" id="GO:0140359">
    <property type="term" value="F:ABC-type transporter activity"/>
    <property type="evidence" value="ECO:0007669"/>
    <property type="project" value="InterPro"/>
</dbReference>
<dbReference type="GO" id="GO:0005524">
    <property type="term" value="F:ATP binding"/>
    <property type="evidence" value="ECO:0007669"/>
    <property type="project" value="UniProtKB-KW"/>
</dbReference>
<dbReference type="GO" id="GO:0016887">
    <property type="term" value="F:ATP hydrolysis activity"/>
    <property type="evidence" value="ECO:0007669"/>
    <property type="project" value="Ensembl"/>
</dbReference>
<dbReference type="GO" id="GO:0042626">
    <property type="term" value="F:ATPase-coupled transmembrane transporter activity"/>
    <property type="evidence" value="ECO:0000250"/>
    <property type="project" value="UniProtKB"/>
</dbReference>
<dbReference type="GO" id="GO:0120020">
    <property type="term" value="F:cholesterol transfer activity"/>
    <property type="evidence" value="ECO:0007669"/>
    <property type="project" value="Ensembl"/>
</dbReference>
<dbReference type="GO" id="GO:0046872">
    <property type="term" value="F:metal ion binding"/>
    <property type="evidence" value="ECO:0007669"/>
    <property type="project" value="UniProtKB-KW"/>
</dbReference>
<dbReference type="GO" id="GO:0046982">
    <property type="term" value="F:protein heterodimerization activity"/>
    <property type="evidence" value="ECO:0000250"/>
    <property type="project" value="UniProtKB"/>
</dbReference>
<dbReference type="GO" id="GO:0033344">
    <property type="term" value="P:cholesterol efflux"/>
    <property type="evidence" value="ECO:0000250"/>
    <property type="project" value="UniProtKB"/>
</dbReference>
<dbReference type="GO" id="GO:0042632">
    <property type="term" value="P:cholesterol homeostasis"/>
    <property type="evidence" value="ECO:0000270"/>
    <property type="project" value="RGD"/>
</dbReference>
<dbReference type="GO" id="GO:0045796">
    <property type="term" value="P:negative regulation of intestinal cholesterol absorption"/>
    <property type="evidence" value="ECO:0000266"/>
    <property type="project" value="RGD"/>
</dbReference>
<dbReference type="GO" id="GO:0010949">
    <property type="term" value="P:negative regulation of intestinal phytosterol absorption"/>
    <property type="evidence" value="ECO:0000266"/>
    <property type="project" value="RGD"/>
</dbReference>
<dbReference type="GO" id="GO:0010212">
    <property type="term" value="P:response to ionizing radiation"/>
    <property type="evidence" value="ECO:0000270"/>
    <property type="project" value="RGD"/>
</dbReference>
<dbReference type="GO" id="GO:0014850">
    <property type="term" value="P:response to muscle activity"/>
    <property type="evidence" value="ECO:0000270"/>
    <property type="project" value="RGD"/>
</dbReference>
<dbReference type="GO" id="GO:0007584">
    <property type="term" value="P:response to nutrient"/>
    <property type="evidence" value="ECO:0000270"/>
    <property type="project" value="RGD"/>
</dbReference>
<dbReference type="GO" id="GO:0031667">
    <property type="term" value="P:response to nutrient levels"/>
    <property type="evidence" value="ECO:0000270"/>
    <property type="project" value="RGD"/>
</dbReference>
<dbReference type="GO" id="GO:0009410">
    <property type="term" value="P:response to xenobiotic stimulus"/>
    <property type="evidence" value="ECO:0000270"/>
    <property type="project" value="RGD"/>
</dbReference>
<dbReference type="GO" id="GO:0015918">
    <property type="term" value="P:sterol transport"/>
    <property type="evidence" value="ECO:0000250"/>
    <property type="project" value="UniProtKB"/>
</dbReference>
<dbReference type="GO" id="GO:0055085">
    <property type="term" value="P:transmembrane transport"/>
    <property type="evidence" value="ECO:0000318"/>
    <property type="project" value="GO_Central"/>
</dbReference>
<dbReference type="GO" id="GO:0070328">
    <property type="term" value="P:triglyceride homeostasis"/>
    <property type="evidence" value="ECO:0000270"/>
    <property type="project" value="RGD"/>
</dbReference>
<dbReference type="CDD" id="cd03234">
    <property type="entry name" value="ABCG_White"/>
    <property type="match status" value="1"/>
</dbReference>
<dbReference type="FunFam" id="3.40.50.300:FF:001069">
    <property type="entry name" value="ATP-binding cassette, sub-family G (WHITE), member 5"/>
    <property type="match status" value="1"/>
</dbReference>
<dbReference type="Gene3D" id="3.40.50.300">
    <property type="entry name" value="P-loop containing nucleotide triphosphate hydrolases"/>
    <property type="match status" value="1"/>
</dbReference>
<dbReference type="InterPro" id="IPR003593">
    <property type="entry name" value="AAA+_ATPase"/>
</dbReference>
<dbReference type="InterPro" id="IPR013525">
    <property type="entry name" value="ABC2_TM"/>
</dbReference>
<dbReference type="InterPro" id="IPR003439">
    <property type="entry name" value="ABC_transporter-like_ATP-bd"/>
</dbReference>
<dbReference type="InterPro" id="IPR017871">
    <property type="entry name" value="ABC_transporter-like_CS"/>
</dbReference>
<dbReference type="InterPro" id="IPR043926">
    <property type="entry name" value="ABCG_dom"/>
</dbReference>
<dbReference type="InterPro" id="IPR050352">
    <property type="entry name" value="ABCG_transporters"/>
</dbReference>
<dbReference type="InterPro" id="IPR027417">
    <property type="entry name" value="P-loop_NTPase"/>
</dbReference>
<dbReference type="PANTHER" id="PTHR48041">
    <property type="entry name" value="ABC TRANSPORTER G FAMILY MEMBER 28"/>
    <property type="match status" value="1"/>
</dbReference>
<dbReference type="PANTHER" id="PTHR48041:SF113">
    <property type="entry name" value="ATP-BINDING CASSETTE SUB-FAMILY G MEMBER 5"/>
    <property type="match status" value="1"/>
</dbReference>
<dbReference type="Pfam" id="PF01061">
    <property type="entry name" value="ABC2_membrane"/>
    <property type="match status" value="1"/>
</dbReference>
<dbReference type="Pfam" id="PF19055">
    <property type="entry name" value="ABC2_membrane_7"/>
    <property type="match status" value="1"/>
</dbReference>
<dbReference type="Pfam" id="PF00005">
    <property type="entry name" value="ABC_tran"/>
    <property type="match status" value="1"/>
</dbReference>
<dbReference type="SMART" id="SM00382">
    <property type="entry name" value="AAA"/>
    <property type="match status" value="1"/>
</dbReference>
<dbReference type="SUPFAM" id="SSF52540">
    <property type="entry name" value="P-loop containing nucleoside triphosphate hydrolases"/>
    <property type="match status" value="1"/>
</dbReference>
<dbReference type="PROSITE" id="PS00211">
    <property type="entry name" value="ABC_TRANSPORTER_1"/>
    <property type="match status" value="1"/>
</dbReference>
<dbReference type="PROSITE" id="PS50893">
    <property type="entry name" value="ABC_TRANSPORTER_2"/>
    <property type="match status" value="1"/>
</dbReference>
<accession>Q99PE7</accession>
<accession>Q8CIQ4</accession>
<reference key="1">
    <citation type="journal article" date="2001" name="Nat. Genet.">
        <title>Identification of a gene, ABCG5, important in the regulation of dietary cholesterol absorption.</title>
        <authorList>
            <person name="Lee M.-H."/>
            <person name="Lu K."/>
            <person name="Hazard S."/>
            <person name="Yu H."/>
            <person name="Shulenin S."/>
            <person name="Hidaka H."/>
            <person name="Kojima H."/>
            <person name="Allikmets R."/>
            <person name="Sakuma N."/>
            <person name="Pegoraro R."/>
            <person name="Srivastava A.K."/>
            <person name="Salen G."/>
            <person name="Dean M."/>
            <person name="Patel S.B."/>
        </authorList>
    </citation>
    <scope>NUCLEOTIDE SEQUENCE [MRNA]</scope>
    <source>
        <strain>Sprague-Dawley</strain>
        <tissue>Small intestine</tissue>
    </source>
</reference>
<reference key="2">
    <citation type="submission" date="2002-08" db="EMBL/GenBank/DDBJ databases">
        <authorList>
            <person name="Lu K."/>
            <person name="Lee M.-H."/>
            <person name="Patel S.B."/>
        </authorList>
    </citation>
    <scope>SEQUENCE REVISION TO 2</scope>
</reference>
<reference key="3">
    <citation type="journal article" date="2003" name="BMC Cardiovasc. Disord.">
        <title>The rat STSL locus: characterization, chromosomal assignment, and genetic variations in sitosterolemic hypertensive rats.</title>
        <authorList>
            <person name="Yu H."/>
            <person name="Pandit B."/>
            <person name="Klett E."/>
            <person name="Lee M.-H."/>
            <person name="Lu K."/>
            <person name="Helou K."/>
            <person name="Ikeda I."/>
            <person name="Egashira N."/>
            <person name="Sato M."/>
            <person name="Klein R."/>
            <person name="Batta A."/>
            <person name="Salen G."/>
            <person name="Patel S.B."/>
        </authorList>
    </citation>
    <scope>NUCLEOTIDE SEQUENCE</scope>
    <scope>TISSUE SPECIFICITY</scope>
    <scope>POLYMORPHISM</scope>
    <scope>VARIANT CYS-583</scope>
    <source>
        <strain>GH</strain>
        <strain>SHR</strain>
        <strain>SHRSP</strain>
        <strain>Sprague-Dawley</strain>
        <strain>Wistar</strain>
        <strain>Wistar Kyoto</strain>
        <strain>WKA</strain>
    </source>
</reference>
<sequence length="652" mass="73372">MSELPFLSPEGARGPHNNRGSQSSLEEGSVTGSEARHSLGVLNVSFSVSNRVGPWWNIKSCQQKWDRKILKDVSLYIESGQTMCILGSSGSGKTTLLDAISGRLRRTGTLEGEVFVNGCELRRDQFQDCVSYLLQSDVFLSSLTVRETLRYTAMLALRSSSADFYDKKVEAVLTELSLSHVADQMIGNYNFGGISSGERRRVSIAAQLLQDPKVMMLDEPTTGLDCMTANHIVLLLVELARRNRIVIVTIHQPRSELFHHFDKIAILTYGELVFCGTPEEMLGFFNNCGYPCPEHSNPFDFYMDLTSVDTQSREREIETYKRVQMLESAFRQSDICHKILENIERTRHLKTLPMVPFKTKNPPGMFCKLGVLLRRVTRNLMRNKQVVIMRLVQNLIMGLFLIFYLLRVQNNMLKGAVQDRVGLLYQLVGATPYTGMLNAVNLFPMLRAVSDQESQDGLYQKWQMLLAYVLHALPFSIVATVIFSSVCYWTLGLYPEVARFGYFSAALLAPHLIGEFLTLVLLGMVQNPNIVNSIVALLSISGLLIGSGFIRNIEEMPIPLKILGYFTFQKYCCEILVVNEFYGLNFTCGGSNTSVPNNPMCSMTQGIQFIEKTCPGATSRFTTNFLILYSFIPTLVILGMVVFKVRDYLISR</sequence>
<keyword id="KW-0067">ATP-binding</keyword>
<keyword id="KW-1003">Cell membrane</keyword>
<keyword id="KW-0325">Glycoprotein</keyword>
<keyword id="KW-0445">Lipid transport</keyword>
<keyword id="KW-0460">Magnesium</keyword>
<keyword id="KW-0472">Membrane</keyword>
<keyword id="KW-0479">Metal-binding</keyword>
<keyword id="KW-0547">Nucleotide-binding</keyword>
<keyword id="KW-1185">Reference proteome</keyword>
<keyword id="KW-1278">Translocase</keyword>
<keyword id="KW-0812">Transmembrane</keyword>
<keyword id="KW-1133">Transmembrane helix</keyword>
<keyword id="KW-0813">Transport</keyword>
<name>ABCG5_RAT</name>
<protein>
    <recommendedName>
        <fullName evidence="7">ATP-binding cassette sub-family G member 5</fullName>
        <ecNumber evidence="1">7.6.2.-</ecNumber>
    </recommendedName>
    <alternativeName>
        <fullName evidence="1">Sterolin-1</fullName>
    </alternativeName>
</protein>
<feature type="chain" id="PRO_0000093395" description="ATP-binding cassette sub-family G member 5">
    <location>
        <begin position="1"/>
        <end position="652"/>
    </location>
</feature>
<feature type="topological domain" description="Cytoplasmic" evidence="2">
    <location>
        <begin position="1"/>
        <end position="384"/>
    </location>
</feature>
<feature type="transmembrane region" description="Helical; Name=1" evidence="2">
    <location>
        <begin position="385"/>
        <end position="405"/>
    </location>
</feature>
<feature type="topological domain" description="Extracellular" evidence="2">
    <location>
        <begin position="406"/>
        <end position="422"/>
    </location>
</feature>
<feature type="transmembrane region" description="Helical; Name=2" evidence="2">
    <location>
        <begin position="423"/>
        <end position="443"/>
    </location>
</feature>
<feature type="topological domain" description="Cytoplasmic" evidence="2">
    <location>
        <begin position="444"/>
        <end position="468"/>
    </location>
</feature>
<feature type="transmembrane region" description="Helical; Name=3" evidence="2">
    <location>
        <begin position="469"/>
        <end position="490"/>
    </location>
</feature>
<feature type="topological domain" description="Extracellular" evidence="2">
    <location>
        <begin position="491"/>
        <end position="501"/>
    </location>
</feature>
<feature type="transmembrane region" description="Helical; Name=4" evidence="2">
    <location>
        <begin position="502"/>
        <end position="522"/>
    </location>
</feature>
<feature type="topological domain" description="Cytoplasmic" evidence="2">
    <location>
        <begin position="523"/>
        <end position="529"/>
    </location>
</feature>
<feature type="transmembrane region" description="Helical; Name=5" evidence="2">
    <location>
        <begin position="530"/>
        <end position="550"/>
    </location>
</feature>
<feature type="topological domain" description="Extracellular" evidence="2">
    <location>
        <begin position="551"/>
        <end position="624"/>
    </location>
</feature>
<feature type="transmembrane region" description="Helical; Name=6" evidence="2">
    <location>
        <begin position="625"/>
        <end position="645"/>
    </location>
</feature>
<feature type="topological domain" description="Cytoplasmic" evidence="2">
    <location>
        <begin position="646"/>
        <end position="652"/>
    </location>
</feature>
<feature type="domain" description="ABC transporter" evidence="4">
    <location>
        <begin position="39"/>
        <end position="294"/>
    </location>
</feature>
<feature type="domain" description="ABC transmembrane type-2">
    <location>
        <begin position="389"/>
        <end position="646"/>
    </location>
</feature>
<feature type="region of interest" description="Disordered" evidence="5">
    <location>
        <begin position="1"/>
        <end position="30"/>
    </location>
</feature>
<feature type="compositionally biased region" description="Polar residues" evidence="5">
    <location>
        <begin position="18"/>
        <end position="30"/>
    </location>
</feature>
<feature type="binding site" evidence="4">
    <location>
        <begin position="87"/>
        <end position="94"/>
    </location>
    <ligand>
        <name>ATP</name>
        <dbReference type="ChEBI" id="CHEBI:30616"/>
    </ligand>
</feature>
<feature type="glycosylation site" description="N-linked (GlcNAc...) asparagine" evidence="3">
    <location>
        <position position="585"/>
    </location>
</feature>
<feature type="glycosylation site" description="N-linked (GlcNAc...) asparagine" evidence="3">
    <location>
        <position position="592"/>
    </location>
</feature>
<feature type="sequence variant" description="In strain: SHR, SHRSP and Wistar Kyoto." evidence="6">
    <original>G</original>
    <variation>C</variation>
    <location>
        <position position="583"/>
    </location>
</feature>
<gene>
    <name evidence="8" type="primary">Abcg5</name>
</gene>
<organism>
    <name type="scientific">Rattus norvegicus</name>
    <name type="common">Rat</name>
    <dbReference type="NCBI Taxonomy" id="10116"/>
    <lineage>
        <taxon>Eukaryota</taxon>
        <taxon>Metazoa</taxon>
        <taxon>Chordata</taxon>
        <taxon>Craniata</taxon>
        <taxon>Vertebrata</taxon>
        <taxon>Euteleostomi</taxon>
        <taxon>Mammalia</taxon>
        <taxon>Eutheria</taxon>
        <taxon>Euarchontoglires</taxon>
        <taxon>Glires</taxon>
        <taxon>Rodentia</taxon>
        <taxon>Myomorpha</taxon>
        <taxon>Muroidea</taxon>
        <taxon>Muridae</taxon>
        <taxon>Murinae</taxon>
        <taxon>Rattus</taxon>
    </lineage>
</organism>
<comment type="function">
    <text evidence="2">ABCG5 and ABCG8 form an obligate heterodimer that mediates Mg(2+)- and ATP-dependent sterol transport across the cell membrane. Plays an essential role in the selective transport of dietary plant sterols and cholesterol in and out of the enterocytes and in the selective sterol excretion by the liver into bile. Required for normal sterol homeostasis. The heterodimer with ABCG8 has ATPase activity.</text>
</comment>
<comment type="catalytic activity">
    <reaction evidence="1">
        <text>cholesterol(in) + ATP + H2O = cholesterol(out) + ADP + phosphate + H(+)</text>
        <dbReference type="Rhea" id="RHEA:39051"/>
        <dbReference type="ChEBI" id="CHEBI:15377"/>
        <dbReference type="ChEBI" id="CHEBI:15378"/>
        <dbReference type="ChEBI" id="CHEBI:16113"/>
        <dbReference type="ChEBI" id="CHEBI:30616"/>
        <dbReference type="ChEBI" id="CHEBI:43474"/>
        <dbReference type="ChEBI" id="CHEBI:456216"/>
    </reaction>
    <physiologicalReaction direction="left-to-right" evidence="1">
        <dbReference type="Rhea" id="RHEA:39052"/>
    </physiologicalReaction>
</comment>
<comment type="catalytic activity">
    <reaction evidence="1">
        <text>sitosterol(in) + ATP + H2O = sitosterol(out) + ADP + phosphate + H(+)</text>
        <dbReference type="Rhea" id="RHEA:39103"/>
        <dbReference type="ChEBI" id="CHEBI:15377"/>
        <dbReference type="ChEBI" id="CHEBI:15378"/>
        <dbReference type="ChEBI" id="CHEBI:27693"/>
        <dbReference type="ChEBI" id="CHEBI:30616"/>
        <dbReference type="ChEBI" id="CHEBI:43474"/>
        <dbReference type="ChEBI" id="CHEBI:456216"/>
    </reaction>
    <physiologicalReaction direction="left-to-right" evidence="1">
        <dbReference type="Rhea" id="RHEA:39104"/>
    </physiologicalReaction>
</comment>
<comment type="cofactor">
    <cofactor evidence="1">
        <name>Mg(2+)</name>
        <dbReference type="ChEBI" id="CHEBI:18420"/>
    </cofactor>
</comment>
<comment type="subunit">
    <text evidence="2">Heterodimer with ABCG8.</text>
</comment>
<comment type="subcellular location">
    <subcellularLocation>
        <location evidence="2">Cell membrane</location>
        <topology evidence="2">Multi-pass membrane protein</topology>
    </subcellularLocation>
    <subcellularLocation>
        <location evidence="2">Apical cell membrane</location>
        <topology evidence="2">Multi-pass membrane protein</topology>
    </subcellularLocation>
</comment>
<comment type="tissue specificity">
    <text evidence="6">Detected in liver (at protein level). Expressed only in liver and intestine.</text>
</comment>
<comment type="domain">
    <text evidence="1">The Walker motif (consensus sequence G-X-X-G-X-G-K-[ST]-T) is expected to bind ATP. Within this motif, the conserved Lys is essential for transport activity mediated by the heterodimer with ABCG8.</text>
</comment>
<comment type="PTM">
    <text evidence="1">N-glycosylated. N-glycosylation is important for efficient export out of the endoplasmic reticulum.</text>
</comment>
<comment type="polymorphism">
    <text evidence="6">The polymorphism at position 583 is found in strains SHR, SHRSP and Wistar Kyoto which are both hypertensive and sitosterolemic. Strains which are hypertensive but not sitosterolemic do not contain a polymorphism at this position.</text>
</comment>
<comment type="similarity">
    <text evidence="7">Belongs to the ABC transporter superfamily. ABCG family. Eye pigment precursor importer (TC 3.A.1.204) subfamily.</text>
</comment>